<name>KRR1_DROVI</name>
<evidence type="ECO:0000250" key="1">
    <source>
        <dbReference type="UniProtKB" id="Q9VPU8"/>
    </source>
</evidence>
<evidence type="ECO:0000255" key="2"/>
<evidence type="ECO:0000256" key="3">
    <source>
        <dbReference type="SAM" id="MobiDB-lite"/>
    </source>
</evidence>
<evidence type="ECO:0000312" key="4">
    <source>
        <dbReference type="EMBL" id="EDW65039.1"/>
    </source>
</evidence>
<protein>
    <recommendedName>
        <fullName evidence="1">KRR1 small subunit processome component homolog</fullName>
    </recommendedName>
    <alternativeName>
        <fullName evidence="1">KRR-R motif-containing protein 1</fullName>
    </alternativeName>
    <alternativeName>
        <fullName evidence="1">Protein dribble</fullName>
    </alternativeName>
</protein>
<comment type="function">
    <text evidence="1">Required for 40S ribosome biogenesis. Involved in nucleolar processing of pre-18S ribosomal RNA and ribosome assembly. Binds to RNA. Required for female germline development, cell viability during eye development and for survival of dividing cells and epithelial cells during early wing disk development (By similarity).</text>
</comment>
<comment type="subunit">
    <text evidence="1">Monomer. Component of the ribosomal small subunit (SSU) processome (By similarity).</text>
</comment>
<comment type="subcellular location">
    <subcellularLocation>
        <location evidence="1">Nucleus</location>
        <location evidence="1">Nucleolus</location>
    </subcellularLocation>
</comment>
<comment type="similarity">
    <text evidence="2">Belongs to the KRR1 family.</text>
</comment>
<feature type="chain" id="PRO_0000415656" description="KRR1 small subunit processome component homolog">
    <location>
        <begin position="1"/>
        <end position="343"/>
    </location>
</feature>
<feature type="domain" description="KH" evidence="2">
    <location>
        <begin position="126"/>
        <end position="194"/>
    </location>
</feature>
<feature type="region of interest" description="Disordered" evidence="3">
    <location>
        <begin position="230"/>
        <end position="343"/>
    </location>
</feature>
<feature type="coiled-coil region" evidence="2">
    <location>
        <begin position="272"/>
        <end position="341"/>
    </location>
</feature>
<feature type="compositionally biased region" description="Basic residues" evidence="3">
    <location>
        <begin position="230"/>
        <end position="246"/>
    </location>
</feature>
<feature type="compositionally biased region" description="Basic and acidic residues" evidence="3">
    <location>
        <begin position="272"/>
        <end position="303"/>
    </location>
</feature>
<feature type="compositionally biased region" description="Basic and acidic residues" evidence="3">
    <location>
        <begin position="318"/>
        <end position="331"/>
    </location>
</feature>
<feature type="compositionally biased region" description="Basic residues" evidence="3">
    <location>
        <begin position="333"/>
        <end position="343"/>
    </location>
</feature>
<organism>
    <name type="scientific">Drosophila virilis</name>
    <name type="common">Fruit fly</name>
    <dbReference type="NCBI Taxonomy" id="7244"/>
    <lineage>
        <taxon>Eukaryota</taxon>
        <taxon>Metazoa</taxon>
        <taxon>Ecdysozoa</taxon>
        <taxon>Arthropoda</taxon>
        <taxon>Hexapoda</taxon>
        <taxon>Insecta</taxon>
        <taxon>Pterygota</taxon>
        <taxon>Neoptera</taxon>
        <taxon>Endopterygota</taxon>
        <taxon>Diptera</taxon>
        <taxon>Brachycera</taxon>
        <taxon>Muscomorpha</taxon>
        <taxon>Ephydroidea</taxon>
        <taxon>Drosophilidae</taxon>
        <taxon>Drosophila</taxon>
    </lineage>
</organism>
<sequence length="343" mass="39465">MSDNESDGPTKQSTEPVDNAWSLKIPTFKAEDNPHGLVEESSFATLFPKYREKYLKEVWPLVQQCVAEHHLKAELDLVEGSMVVKTTRKTWDPYIIIKSRDMIKLMARSVPFEQAKRVLQDDIGCDIIKIGNLVHKKEKFVKRRQRLIGPNGATLKSIELLTDCYVLVQGNTVSALGPYKGLQQVRDIVLETMNNVHPIYNIKALMIKRELMKDPKLANEDWSRFLPKFKNKNISKRKQPKNKKPKKEYTPFPPAQPESKIDKQLATGEYFLNKEQKQAKKQQERSVKQAEAAKKQDERRNKDFVPPTEDAPSQSRKRPAETSKVDVDALKAKLMKANKKNRS</sequence>
<proteinExistence type="inferred from homology"/>
<reference evidence="4" key="1">
    <citation type="journal article" date="2007" name="Nature">
        <title>Evolution of genes and genomes on the Drosophila phylogeny.</title>
        <authorList>
            <consortium name="Drosophila 12 genomes consortium"/>
        </authorList>
    </citation>
    <scope>NUCLEOTIDE SEQUENCE [LARGE SCALE GENOMIC DNA]</scope>
    <source>
        <strain evidence="4">Tucson 15010-1051.87</strain>
    </source>
</reference>
<accession>B4LTY6</accession>
<dbReference type="EMBL" id="CH940649">
    <property type="protein sequence ID" value="EDW65039.1"/>
    <property type="molecule type" value="Genomic_DNA"/>
</dbReference>
<dbReference type="RefSeq" id="XP_002052884.1">
    <property type="nucleotide sequence ID" value="XM_002052848.4"/>
</dbReference>
<dbReference type="SMR" id="B4LTY6"/>
<dbReference type="FunCoup" id="B4LTY6">
    <property type="interactions" value="1719"/>
</dbReference>
<dbReference type="STRING" id="7244.B4LTY6"/>
<dbReference type="EnsemblMetazoa" id="FBtr0235553">
    <property type="protein sequence ID" value="FBpp0234045"/>
    <property type="gene ID" value="FBgn0206770"/>
</dbReference>
<dbReference type="EnsemblMetazoa" id="XM_002052848.3">
    <property type="protein sequence ID" value="XP_002052884.1"/>
    <property type="gene ID" value="LOC6629046"/>
</dbReference>
<dbReference type="GeneID" id="6629046"/>
<dbReference type="KEGG" id="dvi:6629046"/>
<dbReference type="CTD" id="33269"/>
<dbReference type="eggNOG" id="KOG2874">
    <property type="taxonomic scope" value="Eukaryota"/>
</dbReference>
<dbReference type="HOGENOM" id="CLU_040185_0_2_1"/>
<dbReference type="InParanoid" id="B4LTY6"/>
<dbReference type="OMA" id="TPDIDKW"/>
<dbReference type="OrthoDB" id="441223at2759"/>
<dbReference type="PhylomeDB" id="B4LTY6"/>
<dbReference type="Proteomes" id="UP000008792">
    <property type="component" value="Unassembled WGS sequence"/>
</dbReference>
<dbReference type="GO" id="GO:0005730">
    <property type="term" value="C:nucleolus"/>
    <property type="evidence" value="ECO:0007669"/>
    <property type="project" value="UniProtKB-SubCell"/>
</dbReference>
<dbReference type="GO" id="GO:0005654">
    <property type="term" value="C:nucleoplasm"/>
    <property type="evidence" value="ECO:0007669"/>
    <property type="project" value="EnsemblMetazoa"/>
</dbReference>
<dbReference type="GO" id="GO:0032040">
    <property type="term" value="C:small-subunit processome"/>
    <property type="evidence" value="ECO:0007669"/>
    <property type="project" value="TreeGrafter"/>
</dbReference>
<dbReference type="GO" id="GO:0003723">
    <property type="term" value="F:RNA binding"/>
    <property type="evidence" value="ECO:0007669"/>
    <property type="project" value="UniProtKB-KW"/>
</dbReference>
<dbReference type="GO" id="GO:0006364">
    <property type="term" value="P:rRNA processing"/>
    <property type="evidence" value="ECO:0007669"/>
    <property type="project" value="UniProtKB-KW"/>
</dbReference>
<dbReference type="CDD" id="cd22393">
    <property type="entry name" value="KH-I_KRR1_rpt1"/>
    <property type="match status" value="1"/>
</dbReference>
<dbReference type="CDD" id="cd22394">
    <property type="entry name" value="KH-I_KRR1_rpt2"/>
    <property type="match status" value="1"/>
</dbReference>
<dbReference type="FunFam" id="3.30.1370.10:FF:000011">
    <property type="entry name" value="KRR1 small subunit processome component"/>
    <property type="match status" value="1"/>
</dbReference>
<dbReference type="FunFam" id="3.30.1370.10:FF:000014">
    <property type="entry name" value="KRR1 small subunit processome component"/>
    <property type="match status" value="1"/>
</dbReference>
<dbReference type="Gene3D" id="3.30.1370.10">
    <property type="entry name" value="K Homology domain, type 1"/>
    <property type="match status" value="2"/>
</dbReference>
<dbReference type="InterPro" id="IPR004087">
    <property type="entry name" value="KH_dom"/>
</dbReference>
<dbReference type="InterPro" id="IPR036612">
    <property type="entry name" value="KH_dom_type_1_sf"/>
</dbReference>
<dbReference type="InterPro" id="IPR041174">
    <property type="entry name" value="KRR1-like_KH1"/>
</dbReference>
<dbReference type="InterPro" id="IPR048550">
    <property type="entry name" value="KRR1-like_KH1_euk"/>
</dbReference>
<dbReference type="InterPro" id="IPR048548">
    <property type="entry name" value="KRR1-like_KH2"/>
</dbReference>
<dbReference type="InterPro" id="IPR048549">
    <property type="entry name" value="KRR1-like_KH2_euk"/>
</dbReference>
<dbReference type="InterPro" id="IPR024166">
    <property type="entry name" value="rRNA_assembly_KRR1"/>
</dbReference>
<dbReference type="PANTHER" id="PTHR12581">
    <property type="entry name" value="HIV-1 REV BINDING PROTEIN 2, 3"/>
    <property type="match status" value="1"/>
</dbReference>
<dbReference type="PANTHER" id="PTHR12581:SF0">
    <property type="entry name" value="KRR1 SMALL SUBUNIT PROCESSOME COMPONENT HOMOLOG"/>
    <property type="match status" value="1"/>
</dbReference>
<dbReference type="Pfam" id="PF17903">
    <property type="entry name" value="KH_KRR1_1st"/>
    <property type="match status" value="1"/>
</dbReference>
<dbReference type="Pfam" id="PF21800">
    <property type="entry name" value="KH_KRR1_2nd"/>
    <property type="match status" value="1"/>
</dbReference>
<dbReference type="PIRSF" id="PIRSF006515">
    <property type="entry name" value="KRR1"/>
    <property type="match status" value="1"/>
</dbReference>
<dbReference type="SMART" id="SM00322">
    <property type="entry name" value="KH"/>
    <property type="match status" value="1"/>
</dbReference>
<dbReference type="SUPFAM" id="SSF54791">
    <property type="entry name" value="Eukaryotic type KH-domain (KH-domain type I)"/>
    <property type="match status" value="1"/>
</dbReference>
<keyword id="KW-0175">Coiled coil</keyword>
<keyword id="KW-0217">Developmental protein</keyword>
<keyword id="KW-0539">Nucleus</keyword>
<keyword id="KW-1185">Reference proteome</keyword>
<keyword id="KW-0687">Ribonucleoprotein</keyword>
<keyword id="KW-0690">Ribosome biogenesis</keyword>
<keyword id="KW-0694">RNA-binding</keyword>
<keyword id="KW-0698">rRNA processing</keyword>
<gene>
    <name evidence="1" type="primary">dbe</name>
    <name evidence="1" type="synonym">dribble</name>
    <name type="ORF">GJ19628</name>
</gene>